<reference key="1">
    <citation type="journal article" date="2003" name="Proc. Natl. Acad. Sci. U.S.A.">
        <title>The complete genome sequence of the Arabidopsis and tomato pathogen Pseudomonas syringae pv. tomato DC3000.</title>
        <authorList>
            <person name="Buell C.R."/>
            <person name="Joardar V."/>
            <person name="Lindeberg M."/>
            <person name="Selengut J."/>
            <person name="Paulsen I.T."/>
            <person name="Gwinn M.L."/>
            <person name="Dodson R.J."/>
            <person name="DeBoy R.T."/>
            <person name="Durkin A.S."/>
            <person name="Kolonay J.F."/>
            <person name="Madupu R."/>
            <person name="Daugherty S.C."/>
            <person name="Brinkac L.M."/>
            <person name="Beanan M.J."/>
            <person name="Haft D.H."/>
            <person name="Nelson W.C."/>
            <person name="Davidsen T.M."/>
            <person name="Zafar N."/>
            <person name="Zhou L."/>
            <person name="Liu J."/>
            <person name="Yuan Q."/>
            <person name="Khouri H.M."/>
            <person name="Fedorova N.B."/>
            <person name="Tran B."/>
            <person name="Russell D."/>
            <person name="Berry K.J."/>
            <person name="Utterback T.R."/>
            <person name="Van Aken S.E."/>
            <person name="Feldblyum T.V."/>
            <person name="D'Ascenzo M."/>
            <person name="Deng W.-L."/>
            <person name="Ramos A.R."/>
            <person name="Alfano J.R."/>
            <person name="Cartinhour S."/>
            <person name="Chatterjee A.K."/>
            <person name="Delaney T.P."/>
            <person name="Lazarowitz S.G."/>
            <person name="Martin G.B."/>
            <person name="Schneider D.J."/>
            <person name="Tang X."/>
            <person name="Bender C.L."/>
            <person name="White O."/>
            <person name="Fraser C.M."/>
            <person name="Collmer A."/>
        </authorList>
    </citation>
    <scope>NUCLEOTIDE SEQUENCE [LARGE SCALE GENOMIC DNA]</scope>
    <source>
        <strain>ATCC BAA-871 / DC3000</strain>
    </source>
</reference>
<keyword id="KW-0963">Cytoplasm</keyword>
<keyword id="KW-0324">Glycolysis</keyword>
<keyword id="KW-0456">Lyase</keyword>
<keyword id="KW-0460">Magnesium</keyword>
<keyword id="KW-0479">Metal-binding</keyword>
<keyword id="KW-1185">Reference proteome</keyword>
<keyword id="KW-0964">Secreted</keyword>
<name>ENO2_PSESM</name>
<organism>
    <name type="scientific">Pseudomonas syringae pv. tomato (strain ATCC BAA-871 / DC3000)</name>
    <dbReference type="NCBI Taxonomy" id="223283"/>
    <lineage>
        <taxon>Bacteria</taxon>
        <taxon>Pseudomonadati</taxon>
        <taxon>Pseudomonadota</taxon>
        <taxon>Gammaproteobacteria</taxon>
        <taxon>Pseudomonadales</taxon>
        <taxon>Pseudomonadaceae</taxon>
        <taxon>Pseudomonas</taxon>
    </lineage>
</organism>
<accession>Q87WD5</accession>
<feature type="chain" id="PRO_0000133952" description="Enolase 2">
    <location>
        <begin position="1"/>
        <end position="427"/>
    </location>
</feature>
<feature type="active site" description="Proton donor" evidence="1">
    <location>
        <position position="207"/>
    </location>
</feature>
<feature type="active site" description="Proton acceptor" evidence="1">
    <location>
        <position position="339"/>
    </location>
</feature>
<feature type="binding site" evidence="1">
    <location>
        <position position="165"/>
    </location>
    <ligand>
        <name>(2R)-2-phosphoglycerate</name>
        <dbReference type="ChEBI" id="CHEBI:58289"/>
    </ligand>
</feature>
<feature type="binding site" evidence="1">
    <location>
        <position position="244"/>
    </location>
    <ligand>
        <name>Mg(2+)</name>
        <dbReference type="ChEBI" id="CHEBI:18420"/>
    </ligand>
</feature>
<feature type="binding site" evidence="1">
    <location>
        <position position="287"/>
    </location>
    <ligand>
        <name>Mg(2+)</name>
        <dbReference type="ChEBI" id="CHEBI:18420"/>
    </ligand>
</feature>
<feature type="binding site" evidence="1">
    <location>
        <position position="314"/>
    </location>
    <ligand>
        <name>Mg(2+)</name>
        <dbReference type="ChEBI" id="CHEBI:18420"/>
    </ligand>
</feature>
<feature type="binding site" evidence="1">
    <location>
        <position position="339"/>
    </location>
    <ligand>
        <name>(2R)-2-phosphoglycerate</name>
        <dbReference type="ChEBI" id="CHEBI:58289"/>
    </ligand>
</feature>
<feature type="binding site" evidence="1">
    <location>
        <position position="368"/>
    </location>
    <ligand>
        <name>(2R)-2-phosphoglycerate</name>
        <dbReference type="ChEBI" id="CHEBI:58289"/>
    </ligand>
</feature>
<feature type="binding site" evidence="1">
    <location>
        <position position="369"/>
    </location>
    <ligand>
        <name>(2R)-2-phosphoglycerate</name>
        <dbReference type="ChEBI" id="CHEBI:58289"/>
    </ligand>
</feature>
<feature type="binding site" evidence="1">
    <location>
        <position position="390"/>
    </location>
    <ligand>
        <name>(2R)-2-phosphoglycerate</name>
        <dbReference type="ChEBI" id="CHEBI:58289"/>
    </ligand>
</feature>
<evidence type="ECO:0000255" key="1">
    <source>
        <dbReference type="HAMAP-Rule" id="MF_00318"/>
    </source>
</evidence>
<protein>
    <recommendedName>
        <fullName evidence="1">Enolase 2</fullName>
        <ecNumber evidence="1">4.2.1.11</ecNumber>
    </recommendedName>
    <alternativeName>
        <fullName evidence="1">2-phospho-D-glycerate hydro-lyase 2</fullName>
    </alternativeName>
    <alternativeName>
        <fullName evidence="1">2-phosphoglycerate dehydratase 2</fullName>
    </alternativeName>
</protein>
<proteinExistence type="inferred from homology"/>
<sequence length="427" mass="46023">MKTQIQAIHAREILDSRGNPTVEVDVTLECGAMGRASVPSGASTGAHEAVELRDKDTQRYSGKGVLKAVSNVNTEILESVRGMNAIDQEQIDHLMIKLDGTSDKSRLGGNAILGVSLAVARAAASALNLPLFQYLGGEQAARMPVPMFNILNGGVHANWQGPDFQEFMIAPTGAGSFKEALRWGSEVYHELKAVLKDAGYSTAVGDEGGFAPALKKNSDAIELIIKAIERAGYTPGSQIEIAIDPASSGFYENGLYHLRSEGRKVDAQELINLYSSWVDKYPIAVLEDGLAEDDWSGWKLLNAALGDRIELVGDDLFVTNVERIQRGITENVANAVLIKPNQIGTLTETKAAIEMAYGANWGAMVSHRSGETVDSSIADLTVAMGTGHLKTGAPCRGERVEKYNQFLRIEEDLGSRAFYAGHDAFVR</sequence>
<comment type="function">
    <text evidence="1">Catalyzes the reversible conversion of 2-phosphoglycerate (2-PG) into phosphoenolpyruvate (PEP). It is essential for the degradation of carbohydrates via glycolysis.</text>
</comment>
<comment type="catalytic activity">
    <reaction evidence="1">
        <text>(2R)-2-phosphoglycerate = phosphoenolpyruvate + H2O</text>
        <dbReference type="Rhea" id="RHEA:10164"/>
        <dbReference type="ChEBI" id="CHEBI:15377"/>
        <dbReference type="ChEBI" id="CHEBI:58289"/>
        <dbReference type="ChEBI" id="CHEBI:58702"/>
        <dbReference type="EC" id="4.2.1.11"/>
    </reaction>
</comment>
<comment type="cofactor">
    <cofactor evidence="1">
        <name>Mg(2+)</name>
        <dbReference type="ChEBI" id="CHEBI:18420"/>
    </cofactor>
    <text evidence="1">Binds a second Mg(2+) ion via substrate during catalysis.</text>
</comment>
<comment type="pathway">
    <text evidence="1">Carbohydrate degradation; glycolysis; pyruvate from D-glyceraldehyde 3-phosphate: step 4/5.</text>
</comment>
<comment type="subunit">
    <text evidence="1">Component of the RNA degradosome, a multiprotein complex involved in RNA processing and mRNA degradation.</text>
</comment>
<comment type="subcellular location">
    <subcellularLocation>
        <location evidence="1">Cytoplasm</location>
    </subcellularLocation>
    <subcellularLocation>
        <location evidence="1">Secreted</location>
    </subcellularLocation>
    <subcellularLocation>
        <location evidence="1">Cell surface</location>
    </subcellularLocation>
    <text evidence="1">Fractions of enolase are present in both the cytoplasm and on the cell surface.</text>
</comment>
<comment type="similarity">
    <text evidence="1">Belongs to the enolase family.</text>
</comment>
<dbReference type="EC" id="4.2.1.11" evidence="1"/>
<dbReference type="EMBL" id="AE016853">
    <property type="protein sequence ID" value="AAO58062.1"/>
    <property type="molecule type" value="Genomic_DNA"/>
</dbReference>
<dbReference type="RefSeq" id="NP_794367.1">
    <property type="nucleotide sequence ID" value="NC_004578.1"/>
</dbReference>
<dbReference type="RefSeq" id="WP_011105084.1">
    <property type="nucleotide sequence ID" value="NC_004578.1"/>
</dbReference>
<dbReference type="SMR" id="Q87WD5"/>
<dbReference type="STRING" id="223283.PSPTO_4616"/>
<dbReference type="GeneID" id="1186299"/>
<dbReference type="KEGG" id="pst:PSPTO_4616"/>
<dbReference type="PATRIC" id="fig|223283.9.peg.4730"/>
<dbReference type="eggNOG" id="COG0148">
    <property type="taxonomic scope" value="Bacteria"/>
</dbReference>
<dbReference type="HOGENOM" id="CLU_031223_2_1_6"/>
<dbReference type="OrthoDB" id="9804716at2"/>
<dbReference type="PhylomeDB" id="Q87WD5"/>
<dbReference type="UniPathway" id="UPA00109">
    <property type="reaction ID" value="UER00187"/>
</dbReference>
<dbReference type="Proteomes" id="UP000002515">
    <property type="component" value="Chromosome"/>
</dbReference>
<dbReference type="GO" id="GO:0009986">
    <property type="term" value="C:cell surface"/>
    <property type="evidence" value="ECO:0007669"/>
    <property type="project" value="UniProtKB-SubCell"/>
</dbReference>
<dbReference type="GO" id="GO:0005576">
    <property type="term" value="C:extracellular region"/>
    <property type="evidence" value="ECO:0007669"/>
    <property type="project" value="UniProtKB-SubCell"/>
</dbReference>
<dbReference type="GO" id="GO:0000015">
    <property type="term" value="C:phosphopyruvate hydratase complex"/>
    <property type="evidence" value="ECO:0007669"/>
    <property type="project" value="InterPro"/>
</dbReference>
<dbReference type="GO" id="GO:0000287">
    <property type="term" value="F:magnesium ion binding"/>
    <property type="evidence" value="ECO:0007669"/>
    <property type="project" value="UniProtKB-UniRule"/>
</dbReference>
<dbReference type="GO" id="GO:0004634">
    <property type="term" value="F:phosphopyruvate hydratase activity"/>
    <property type="evidence" value="ECO:0007669"/>
    <property type="project" value="UniProtKB-UniRule"/>
</dbReference>
<dbReference type="GO" id="GO:0006096">
    <property type="term" value="P:glycolytic process"/>
    <property type="evidence" value="ECO:0007669"/>
    <property type="project" value="UniProtKB-UniRule"/>
</dbReference>
<dbReference type="CDD" id="cd03313">
    <property type="entry name" value="enolase"/>
    <property type="match status" value="1"/>
</dbReference>
<dbReference type="FunFam" id="3.30.390.10:FF:000001">
    <property type="entry name" value="Enolase"/>
    <property type="match status" value="1"/>
</dbReference>
<dbReference type="Gene3D" id="3.20.20.120">
    <property type="entry name" value="Enolase-like C-terminal domain"/>
    <property type="match status" value="1"/>
</dbReference>
<dbReference type="Gene3D" id="3.30.390.10">
    <property type="entry name" value="Enolase-like, N-terminal domain"/>
    <property type="match status" value="1"/>
</dbReference>
<dbReference type="HAMAP" id="MF_00318">
    <property type="entry name" value="Enolase"/>
    <property type="match status" value="1"/>
</dbReference>
<dbReference type="InterPro" id="IPR000941">
    <property type="entry name" value="Enolase"/>
</dbReference>
<dbReference type="InterPro" id="IPR036849">
    <property type="entry name" value="Enolase-like_C_sf"/>
</dbReference>
<dbReference type="InterPro" id="IPR029017">
    <property type="entry name" value="Enolase-like_N"/>
</dbReference>
<dbReference type="InterPro" id="IPR020810">
    <property type="entry name" value="Enolase_C"/>
</dbReference>
<dbReference type="InterPro" id="IPR020809">
    <property type="entry name" value="Enolase_CS"/>
</dbReference>
<dbReference type="InterPro" id="IPR020811">
    <property type="entry name" value="Enolase_N"/>
</dbReference>
<dbReference type="NCBIfam" id="TIGR01060">
    <property type="entry name" value="eno"/>
    <property type="match status" value="1"/>
</dbReference>
<dbReference type="PANTHER" id="PTHR11902">
    <property type="entry name" value="ENOLASE"/>
    <property type="match status" value="1"/>
</dbReference>
<dbReference type="PANTHER" id="PTHR11902:SF1">
    <property type="entry name" value="ENOLASE"/>
    <property type="match status" value="1"/>
</dbReference>
<dbReference type="Pfam" id="PF00113">
    <property type="entry name" value="Enolase_C"/>
    <property type="match status" value="1"/>
</dbReference>
<dbReference type="Pfam" id="PF03952">
    <property type="entry name" value="Enolase_N"/>
    <property type="match status" value="1"/>
</dbReference>
<dbReference type="PIRSF" id="PIRSF001400">
    <property type="entry name" value="Enolase"/>
    <property type="match status" value="1"/>
</dbReference>
<dbReference type="PRINTS" id="PR00148">
    <property type="entry name" value="ENOLASE"/>
</dbReference>
<dbReference type="SFLD" id="SFLDS00001">
    <property type="entry name" value="Enolase"/>
    <property type="match status" value="1"/>
</dbReference>
<dbReference type="SFLD" id="SFLDF00002">
    <property type="entry name" value="enolase"/>
    <property type="match status" value="1"/>
</dbReference>
<dbReference type="SMART" id="SM01192">
    <property type="entry name" value="Enolase_C"/>
    <property type="match status" value="1"/>
</dbReference>
<dbReference type="SMART" id="SM01193">
    <property type="entry name" value="Enolase_N"/>
    <property type="match status" value="1"/>
</dbReference>
<dbReference type="SUPFAM" id="SSF51604">
    <property type="entry name" value="Enolase C-terminal domain-like"/>
    <property type="match status" value="1"/>
</dbReference>
<dbReference type="SUPFAM" id="SSF54826">
    <property type="entry name" value="Enolase N-terminal domain-like"/>
    <property type="match status" value="1"/>
</dbReference>
<dbReference type="PROSITE" id="PS00164">
    <property type="entry name" value="ENOLASE"/>
    <property type="match status" value="1"/>
</dbReference>
<gene>
    <name evidence="1" type="primary">eno2</name>
    <name type="synonym">eno-2</name>
    <name type="ordered locus">PSPTO_4616</name>
</gene>